<accession>Q5F7V9</accession>
<dbReference type="EC" id="3.1.3.5" evidence="1"/>
<dbReference type="EMBL" id="AE004969">
    <property type="protein sequence ID" value="AAW89728.1"/>
    <property type="molecule type" value="Genomic_DNA"/>
</dbReference>
<dbReference type="RefSeq" id="WP_010951167.1">
    <property type="nucleotide sequence ID" value="NC_002946.2"/>
</dbReference>
<dbReference type="RefSeq" id="YP_208140.1">
    <property type="nucleotide sequence ID" value="NC_002946.2"/>
</dbReference>
<dbReference type="SMR" id="Q5F7V9"/>
<dbReference type="STRING" id="242231.NGO_1058"/>
<dbReference type="KEGG" id="ngo:NGO_1058"/>
<dbReference type="PATRIC" id="fig|242231.10.peg.1240"/>
<dbReference type="HOGENOM" id="CLU_045192_1_2_4"/>
<dbReference type="Proteomes" id="UP000000535">
    <property type="component" value="Chromosome"/>
</dbReference>
<dbReference type="GO" id="GO:0005737">
    <property type="term" value="C:cytoplasm"/>
    <property type="evidence" value="ECO:0007669"/>
    <property type="project" value="UniProtKB-SubCell"/>
</dbReference>
<dbReference type="GO" id="GO:0008254">
    <property type="term" value="F:3'-nucleotidase activity"/>
    <property type="evidence" value="ECO:0007669"/>
    <property type="project" value="TreeGrafter"/>
</dbReference>
<dbReference type="GO" id="GO:0008253">
    <property type="term" value="F:5'-nucleotidase activity"/>
    <property type="evidence" value="ECO:0007669"/>
    <property type="project" value="UniProtKB-UniRule"/>
</dbReference>
<dbReference type="GO" id="GO:0004309">
    <property type="term" value="F:exopolyphosphatase activity"/>
    <property type="evidence" value="ECO:0007669"/>
    <property type="project" value="TreeGrafter"/>
</dbReference>
<dbReference type="GO" id="GO:0046872">
    <property type="term" value="F:metal ion binding"/>
    <property type="evidence" value="ECO:0007669"/>
    <property type="project" value="UniProtKB-UniRule"/>
</dbReference>
<dbReference type="GO" id="GO:0000166">
    <property type="term" value="F:nucleotide binding"/>
    <property type="evidence" value="ECO:0007669"/>
    <property type="project" value="UniProtKB-KW"/>
</dbReference>
<dbReference type="FunFam" id="3.40.1210.10:FF:000001">
    <property type="entry name" value="5'/3'-nucleotidase SurE"/>
    <property type="match status" value="1"/>
</dbReference>
<dbReference type="Gene3D" id="3.40.1210.10">
    <property type="entry name" value="Survival protein SurE-like phosphatase/nucleotidase"/>
    <property type="match status" value="1"/>
</dbReference>
<dbReference type="HAMAP" id="MF_00060">
    <property type="entry name" value="SurE"/>
    <property type="match status" value="1"/>
</dbReference>
<dbReference type="InterPro" id="IPR030048">
    <property type="entry name" value="SurE"/>
</dbReference>
<dbReference type="InterPro" id="IPR002828">
    <property type="entry name" value="SurE-like_Pase/nucleotidase"/>
</dbReference>
<dbReference type="InterPro" id="IPR036523">
    <property type="entry name" value="SurE-like_sf"/>
</dbReference>
<dbReference type="NCBIfam" id="NF001489">
    <property type="entry name" value="PRK00346.1-3"/>
    <property type="match status" value="1"/>
</dbReference>
<dbReference type="NCBIfam" id="NF001490">
    <property type="entry name" value="PRK00346.1-4"/>
    <property type="match status" value="1"/>
</dbReference>
<dbReference type="NCBIfam" id="TIGR00087">
    <property type="entry name" value="surE"/>
    <property type="match status" value="1"/>
</dbReference>
<dbReference type="PANTHER" id="PTHR30457">
    <property type="entry name" value="5'-NUCLEOTIDASE SURE"/>
    <property type="match status" value="1"/>
</dbReference>
<dbReference type="PANTHER" id="PTHR30457:SF12">
    <property type="entry name" value="5'_3'-NUCLEOTIDASE SURE"/>
    <property type="match status" value="1"/>
</dbReference>
<dbReference type="Pfam" id="PF01975">
    <property type="entry name" value="SurE"/>
    <property type="match status" value="1"/>
</dbReference>
<dbReference type="SUPFAM" id="SSF64167">
    <property type="entry name" value="SurE-like"/>
    <property type="match status" value="1"/>
</dbReference>
<protein>
    <recommendedName>
        <fullName evidence="1">5'-nucleotidase SurE</fullName>
        <ecNumber evidence="1">3.1.3.5</ecNumber>
    </recommendedName>
    <alternativeName>
        <fullName evidence="1">Nucleoside 5'-monophosphate phosphohydrolase</fullName>
    </alternativeName>
</protein>
<name>SURE_NEIG1</name>
<keyword id="KW-0963">Cytoplasm</keyword>
<keyword id="KW-0378">Hydrolase</keyword>
<keyword id="KW-0479">Metal-binding</keyword>
<keyword id="KW-0547">Nucleotide-binding</keyword>
<keyword id="KW-1185">Reference proteome</keyword>
<sequence>MNVLISNDDGYLAEGIAILARVASEFANVRVVAPERDRSGVSNSVTLDRPLQLKQAQNGFYYVNGTPTDCIHVGQFALPDFKPDVVFSGINRGANMGDDTLYSGTVAAATEAYLMGMPAVAFSLNDASGRYWATAEKALWTLLAHFFKKPPSAPVLWNVNIPAVAPEDVRGIKITRLGRRHHEQNIVPSRNPRGEQIYWIGPVGEVSDREEGTDFGECGAGFITVTPLQIDLTAYPDMAETAAFWHTD</sequence>
<reference key="1">
    <citation type="submission" date="2003-03" db="EMBL/GenBank/DDBJ databases">
        <title>The complete genome sequence of Neisseria gonorrhoeae.</title>
        <authorList>
            <person name="Lewis L.A."/>
            <person name="Gillaspy A.F."/>
            <person name="McLaughlin R.E."/>
            <person name="Gipson M."/>
            <person name="Ducey T.F."/>
            <person name="Ownbey T."/>
            <person name="Hartman K."/>
            <person name="Nydick C."/>
            <person name="Carson M.B."/>
            <person name="Vaughn J."/>
            <person name="Thomson C."/>
            <person name="Song L."/>
            <person name="Lin S."/>
            <person name="Yuan X."/>
            <person name="Najar F."/>
            <person name="Zhan M."/>
            <person name="Ren Q."/>
            <person name="Zhu H."/>
            <person name="Qi S."/>
            <person name="Kenton S.M."/>
            <person name="Lai H."/>
            <person name="White J.D."/>
            <person name="Clifton S."/>
            <person name="Roe B.A."/>
            <person name="Dyer D.W."/>
        </authorList>
    </citation>
    <scope>NUCLEOTIDE SEQUENCE [LARGE SCALE GENOMIC DNA]</scope>
    <source>
        <strain>ATCC 700825 / FA 1090</strain>
    </source>
</reference>
<proteinExistence type="inferred from homology"/>
<comment type="function">
    <text evidence="1">Nucleotidase that shows phosphatase activity on nucleoside 5'-monophosphates.</text>
</comment>
<comment type="catalytic activity">
    <reaction evidence="1">
        <text>a ribonucleoside 5'-phosphate + H2O = a ribonucleoside + phosphate</text>
        <dbReference type="Rhea" id="RHEA:12484"/>
        <dbReference type="ChEBI" id="CHEBI:15377"/>
        <dbReference type="ChEBI" id="CHEBI:18254"/>
        <dbReference type="ChEBI" id="CHEBI:43474"/>
        <dbReference type="ChEBI" id="CHEBI:58043"/>
        <dbReference type="EC" id="3.1.3.5"/>
    </reaction>
</comment>
<comment type="cofactor">
    <cofactor evidence="1">
        <name>a divalent metal cation</name>
        <dbReference type="ChEBI" id="CHEBI:60240"/>
    </cofactor>
    <text evidence="1">Binds 1 divalent metal cation per subunit.</text>
</comment>
<comment type="subcellular location">
    <subcellularLocation>
        <location evidence="1">Cytoplasm</location>
    </subcellularLocation>
</comment>
<comment type="similarity">
    <text evidence="1">Belongs to the SurE nucleotidase family.</text>
</comment>
<gene>
    <name evidence="1" type="primary">surE</name>
    <name type="ordered locus">NGO_1058</name>
</gene>
<evidence type="ECO:0000255" key="1">
    <source>
        <dbReference type="HAMAP-Rule" id="MF_00060"/>
    </source>
</evidence>
<feature type="chain" id="PRO_0000235627" description="5'-nucleotidase SurE">
    <location>
        <begin position="1"/>
        <end position="248"/>
    </location>
</feature>
<feature type="binding site" evidence="1">
    <location>
        <position position="8"/>
    </location>
    <ligand>
        <name>a divalent metal cation</name>
        <dbReference type="ChEBI" id="CHEBI:60240"/>
    </ligand>
</feature>
<feature type="binding site" evidence="1">
    <location>
        <position position="9"/>
    </location>
    <ligand>
        <name>a divalent metal cation</name>
        <dbReference type="ChEBI" id="CHEBI:60240"/>
    </ligand>
</feature>
<feature type="binding site" evidence="1">
    <location>
        <position position="39"/>
    </location>
    <ligand>
        <name>a divalent metal cation</name>
        <dbReference type="ChEBI" id="CHEBI:60240"/>
    </ligand>
</feature>
<feature type="binding site" evidence="1">
    <location>
        <position position="91"/>
    </location>
    <ligand>
        <name>a divalent metal cation</name>
        <dbReference type="ChEBI" id="CHEBI:60240"/>
    </ligand>
</feature>
<organism>
    <name type="scientific">Neisseria gonorrhoeae (strain ATCC 700825 / FA 1090)</name>
    <dbReference type="NCBI Taxonomy" id="242231"/>
    <lineage>
        <taxon>Bacteria</taxon>
        <taxon>Pseudomonadati</taxon>
        <taxon>Pseudomonadota</taxon>
        <taxon>Betaproteobacteria</taxon>
        <taxon>Neisseriales</taxon>
        <taxon>Neisseriaceae</taxon>
        <taxon>Neisseria</taxon>
    </lineage>
</organism>